<feature type="chain" id="PRO_0000104954" description="DNA-binding protein HU">
    <location>
        <begin position="1"/>
        <end position="90"/>
    </location>
</feature>
<proteinExistence type="inferred from homology"/>
<gene>
    <name type="primary">hup</name>
    <name type="synonym">hupA</name>
    <name type="ordered locus">PM1732</name>
</gene>
<sequence>MNKTDLIDAIASAAELNKKQAKAALEATLEAISGSLKAGEPVQLIGFGTFKVNSRKARTGRNPQTGAEIKIAASKVPAFVAGKALKDAVK</sequence>
<evidence type="ECO:0000250" key="1"/>
<evidence type="ECO:0000305" key="2"/>
<accession>Q9CK94</accession>
<name>DBH_PASMU</name>
<organism>
    <name type="scientific">Pasteurella multocida (strain Pm70)</name>
    <dbReference type="NCBI Taxonomy" id="272843"/>
    <lineage>
        <taxon>Bacteria</taxon>
        <taxon>Pseudomonadati</taxon>
        <taxon>Pseudomonadota</taxon>
        <taxon>Gammaproteobacteria</taxon>
        <taxon>Pasteurellales</taxon>
        <taxon>Pasteurellaceae</taxon>
        <taxon>Pasteurella</taxon>
    </lineage>
</organism>
<comment type="function">
    <text evidence="1">Histone-like DNA-binding protein which is capable of wrapping DNA to stabilize it, and thus to prevent its denaturation under extreme environmental conditions.</text>
</comment>
<comment type="subunit">
    <text evidence="2">Homodimer.</text>
</comment>
<comment type="similarity">
    <text evidence="2">Belongs to the bacterial histone-like protein family.</text>
</comment>
<reference key="1">
    <citation type="journal article" date="2001" name="Proc. Natl. Acad. Sci. U.S.A.">
        <title>Complete genomic sequence of Pasteurella multocida Pm70.</title>
        <authorList>
            <person name="May B.J."/>
            <person name="Zhang Q."/>
            <person name="Li L.L."/>
            <person name="Paustian M.L."/>
            <person name="Whittam T.S."/>
            <person name="Kapur V."/>
        </authorList>
    </citation>
    <scope>NUCLEOTIDE SEQUENCE [LARGE SCALE GENOMIC DNA]</scope>
    <source>
        <strain>Pm70</strain>
    </source>
</reference>
<keyword id="KW-0226">DNA condensation</keyword>
<keyword id="KW-0238">DNA-binding</keyword>
<keyword id="KW-1185">Reference proteome</keyword>
<dbReference type="EMBL" id="AE004439">
    <property type="protein sequence ID" value="AAK03816.1"/>
    <property type="molecule type" value="Genomic_DNA"/>
</dbReference>
<dbReference type="RefSeq" id="WP_005724684.1">
    <property type="nucleotide sequence ID" value="NC_002663.1"/>
</dbReference>
<dbReference type="SMR" id="Q9CK94"/>
<dbReference type="STRING" id="272843.PM1732"/>
<dbReference type="EnsemblBacteria" id="AAK03816">
    <property type="protein sequence ID" value="AAK03816"/>
    <property type="gene ID" value="PM1732"/>
</dbReference>
<dbReference type="KEGG" id="pmu:PM1732"/>
<dbReference type="HOGENOM" id="CLU_105066_3_1_6"/>
<dbReference type="OrthoDB" id="9799835at2"/>
<dbReference type="Proteomes" id="UP000000809">
    <property type="component" value="Chromosome"/>
</dbReference>
<dbReference type="GO" id="GO:0005829">
    <property type="term" value="C:cytosol"/>
    <property type="evidence" value="ECO:0007669"/>
    <property type="project" value="TreeGrafter"/>
</dbReference>
<dbReference type="GO" id="GO:0003677">
    <property type="term" value="F:DNA binding"/>
    <property type="evidence" value="ECO:0007669"/>
    <property type="project" value="UniProtKB-KW"/>
</dbReference>
<dbReference type="GO" id="GO:0030527">
    <property type="term" value="F:structural constituent of chromatin"/>
    <property type="evidence" value="ECO:0007669"/>
    <property type="project" value="InterPro"/>
</dbReference>
<dbReference type="GO" id="GO:0030261">
    <property type="term" value="P:chromosome condensation"/>
    <property type="evidence" value="ECO:0007669"/>
    <property type="project" value="UniProtKB-KW"/>
</dbReference>
<dbReference type="CDD" id="cd13831">
    <property type="entry name" value="HU"/>
    <property type="match status" value="1"/>
</dbReference>
<dbReference type="FunFam" id="4.10.520.10:FF:000001">
    <property type="entry name" value="DNA-binding protein HU"/>
    <property type="match status" value="1"/>
</dbReference>
<dbReference type="Gene3D" id="4.10.520.10">
    <property type="entry name" value="IHF-like DNA-binding proteins"/>
    <property type="match status" value="1"/>
</dbReference>
<dbReference type="InterPro" id="IPR000119">
    <property type="entry name" value="Hist_DNA-bd"/>
</dbReference>
<dbReference type="InterPro" id="IPR020816">
    <property type="entry name" value="Histone-like_DNA-bd_CS"/>
</dbReference>
<dbReference type="InterPro" id="IPR010992">
    <property type="entry name" value="IHF-like_DNA-bd_dom_sf"/>
</dbReference>
<dbReference type="PANTHER" id="PTHR33175">
    <property type="entry name" value="DNA-BINDING PROTEIN HU"/>
    <property type="match status" value="1"/>
</dbReference>
<dbReference type="PANTHER" id="PTHR33175:SF12">
    <property type="entry name" value="DNA-BINDING PROTEIN HU-ALPHA"/>
    <property type="match status" value="1"/>
</dbReference>
<dbReference type="Pfam" id="PF00216">
    <property type="entry name" value="Bac_DNA_binding"/>
    <property type="match status" value="1"/>
</dbReference>
<dbReference type="PRINTS" id="PR01727">
    <property type="entry name" value="DNABINDINGHU"/>
</dbReference>
<dbReference type="SMART" id="SM00411">
    <property type="entry name" value="BHL"/>
    <property type="match status" value="1"/>
</dbReference>
<dbReference type="SUPFAM" id="SSF47729">
    <property type="entry name" value="IHF-like DNA-binding proteins"/>
    <property type="match status" value="1"/>
</dbReference>
<dbReference type="PROSITE" id="PS00045">
    <property type="entry name" value="HISTONE_LIKE"/>
    <property type="match status" value="1"/>
</dbReference>
<protein>
    <recommendedName>
        <fullName>DNA-binding protein HU</fullName>
    </recommendedName>
</protein>